<keyword id="KW-0157">Chromophore</keyword>
<keyword id="KW-1015">Disulfide bond</keyword>
<keyword id="KW-0297">G-protein coupled receptor</keyword>
<keyword id="KW-0325">Glycoprotein</keyword>
<keyword id="KW-0472">Membrane</keyword>
<keyword id="KW-0600">Photoreceptor protein</keyword>
<keyword id="KW-0675">Receptor</keyword>
<keyword id="KW-1185">Reference proteome</keyword>
<keyword id="KW-0681">Retinal protein</keyword>
<keyword id="KW-0716">Sensory transduction</keyword>
<keyword id="KW-0807">Transducer</keyword>
<keyword id="KW-0812">Transmembrane</keyword>
<keyword id="KW-1133">Transmembrane helix</keyword>
<keyword id="KW-0844">Vision</keyword>
<reference evidence="5 6" key="1">
    <citation type="journal article" date="2001" name="Biochem. Biophys. Res. Commun.">
        <title>Molecular cloning of Bombyx cerebral opsin (Boceropsin) and cellular localization of its expression in the silkworm brain.</title>
        <authorList>
            <person name="Shimizu I."/>
            <person name="Yamakawa Y."/>
            <person name="Shimazaki Y."/>
            <person name="Iwasa T."/>
        </authorList>
    </citation>
    <scope>NUCLEOTIDE SEQUENCE [MRNA]</scope>
    <scope>FUNCTION</scope>
    <scope>TISSUE SPECIFICITY</scope>
    <source>
        <tissue evidence="3">Larval brain</tissue>
    </source>
</reference>
<reference evidence="7" key="2">
    <citation type="submission" date="2004-07" db="EMBL/GenBank/DDBJ databases">
        <title>Promoter analysis of Boceropsin gene of Bombyx mori.</title>
        <authorList>
            <person name="Atsumi T."/>
            <person name="Yasukochi Y."/>
            <person name="Fujiwara Y."/>
            <person name="Shiomi K."/>
        </authorList>
    </citation>
    <scope>NUCLEOTIDE SEQUENCE [GENOMIC DNA]</scope>
</reference>
<sequence length="381" mass="42241">MSISMDAGPGFAALQSWSSQVAAFGNSNQTVVDRVSPEMLHLIDAYWYQFPPMNPLWHALLGFTIGVLGFISMMGNGMVIYIFMTTKNLKTPSNLLVVNLAFSDFLMMCAMSPAMVINCYNETWVFGPFACELYGCAGSLFGCASIWTMTMIAFDRYNVIVKGIAAKPMTNNGALLRILGIWAFSLAWTVAPFFGWNRYVPEGNMTACGTDYLTKDWFSRSYIVVYSVFVYFAPLLLIVYSYYYIVQAVSAHEKAMREQAKKMNVASLRSSEAANTSTECKLAKVALMTISLWFMAWTPYLVINYTGILESAPISPLATIWGSLFAKANAVYNPIVYGISHPKYQAALYKRFPVLQCHSTTTDEASSVASGTTVMEEKPTA</sequence>
<feature type="chain" id="PRO_0000389423" description="Ceropsin">
    <location>
        <begin position="1"/>
        <end position="381"/>
    </location>
</feature>
<feature type="topological domain" description="Extracellular" evidence="1">
    <location>
        <begin position="1"/>
        <end position="62"/>
    </location>
</feature>
<feature type="transmembrane region" description="Helical; Name=1" evidence="1">
    <location>
        <begin position="63"/>
        <end position="83"/>
    </location>
</feature>
<feature type="topological domain" description="Cytoplasmic" evidence="1">
    <location>
        <begin position="84"/>
        <end position="96"/>
    </location>
</feature>
<feature type="transmembrane region" description="Helical; Name=2" evidence="1">
    <location>
        <begin position="97"/>
        <end position="117"/>
    </location>
</feature>
<feature type="topological domain" description="Extracellular" evidence="1">
    <location>
        <begin position="118"/>
        <end position="133"/>
    </location>
</feature>
<feature type="transmembrane region" description="Helical; Name=3" evidence="1">
    <location>
        <begin position="134"/>
        <end position="154"/>
    </location>
</feature>
<feature type="topological domain" description="Cytoplasmic" evidence="1">
    <location>
        <begin position="155"/>
        <end position="173"/>
    </location>
</feature>
<feature type="transmembrane region" description="Helical; Name=4" evidence="1">
    <location>
        <begin position="174"/>
        <end position="194"/>
    </location>
</feature>
<feature type="topological domain" description="Extracellular" evidence="1">
    <location>
        <begin position="195"/>
        <end position="221"/>
    </location>
</feature>
<feature type="transmembrane region" description="Helical; Name=5" evidence="1">
    <location>
        <begin position="222"/>
        <end position="242"/>
    </location>
</feature>
<feature type="topological domain" description="Cytoplasmic" evidence="1">
    <location>
        <begin position="243"/>
        <end position="284"/>
    </location>
</feature>
<feature type="transmembrane region" description="Helical; Name=6" evidence="1">
    <location>
        <begin position="285"/>
        <end position="305"/>
    </location>
</feature>
<feature type="topological domain" description="Extracellular" evidence="1">
    <location>
        <begin position="306"/>
        <end position="316"/>
    </location>
</feature>
<feature type="transmembrane region" description="Helical; Name=7" evidence="1">
    <location>
        <begin position="317"/>
        <end position="339"/>
    </location>
</feature>
<feature type="topological domain" description="Cytoplasmic" evidence="1">
    <location>
        <begin position="340"/>
        <end position="381"/>
    </location>
</feature>
<feature type="glycosylation site" description="N-linked (GlcNAc...) asparagine" evidence="1">
    <location>
        <position position="28"/>
    </location>
</feature>
<feature type="glycosylation site" description="N-linked (GlcNAc...) asparagine" evidence="1">
    <location>
        <position position="121"/>
    </location>
</feature>
<feature type="glycosylation site" description="N-linked (GlcNAc...) asparagine" evidence="1">
    <location>
        <position position="204"/>
    </location>
</feature>
<feature type="disulfide bond" evidence="2">
    <location>
        <begin position="131"/>
        <end position="208"/>
    </location>
</feature>
<dbReference type="EMBL" id="AB064496">
    <property type="protein sequence ID" value="BAB63283.1"/>
    <property type="molecule type" value="mRNA"/>
</dbReference>
<dbReference type="EMBL" id="AB184967">
    <property type="protein sequence ID" value="BAF73627.1"/>
    <property type="molecule type" value="Genomic_DNA"/>
</dbReference>
<dbReference type="PIR" id="JC7760">
    <property type="entry name" value="JC7760"/>
</dbReference>
<dbReference type="RefSeq" id="NP_001036882.1">
    <property type="nucleotide sequence ID" value="NM_001043417.1"/>
</dbReference>
<dbReference type="RefSeq" id="XP_012547741.1">
    <property type="nucleotide sequence ID" value="XM_012692287.1"/>
</dbReference>
<dbReference type="SMR" id="Q95YI3"/>
<dbReference type="FunCoup" id="Q95YI3">
    <property type="interactions" value="12"/>
</dbReference>
<dbReference type="STRING" id="7091.Q95YI3"/>
<dbReference type="GlyCosmos" id="Q95YI3">
    <property type="glycosylation" value="3 sites, No reported glycans"/>
</dbReference>
<dbReference type="PaxDb" id="7091-BGIBMGA007787-TA"/>
<dbReference type="EnsemblMetazoa" id="NM_001043417.1">
    <property type="protein sequence ID" value="NP_001036882.1"/>
    <property type="gene ID" value="GeneID_692426"/>
</dbReference>
<dbReference type="EnsemblMetazoa" id="XM_038015587.1">
    <property type="protein sequence ID" value="XP_037871515.1"/>
    <property type="gene ID" value="GeneID_692426"/>
</dbReference>
<dbReference type="EnsemblMetazoa" id="XM_038015588.1">
    <property type="protein sequence ID" value="XP_037871516.1"/>
    <property type="gene ID" value="GeneID_692426"/>
</dbReference>
<dbReference type="GeneID" id="692426"/>
<dbReference type="KEGG" id="bmor:692426"/>
<dbReference type="CTD" id="45837"/>
<dbReference type="eggNOG" id="KOG3656">
    <property type="taxonomic scope" value="Eukaryota"/>
</dbReference>
<dbReference type="HOGENOM" id="CLU_009579_3_0_1"/>
<dbReference type="InParanoid" id="Q95YI3"/>
<dbReference type="OrthoDB" id="277218at7088"/>
<dbReference type="Proteomes" id="UP000005204">
    <property type="component" value="Unassembled WGS sequence"/>
</dbReference>
<dbReference type="GO" id="GO:0016020">
    <property type="term" value="C:membrane"/>
    <property type="evidence" value="ECO:0007669"/>
    <property type="project" value="UniProtKB-SubCell"/>
</dbReference>
<dbReference type="GO" id="GO:0004930">
    <property type="term" value="F:G protein-coupled receptor activity"/>
    <property type="evidence" value="ECO:0007669"/>
    <property type="project" value="UniProtKB-KW"/>
</dbReference>
<dbReference type="GO" id="GO:0009881">
    <property type="term" value="F:photoreceptor activity"/>
    <property type="evidence" value="ECO:0007669"/>
    <property type="project" value="UniProtKB-KW"/>
</dbReference>
<dbReference type="GO" id="GO:0007602">
    <property type="term" value="P:phototransduction"/>
    <property type="evidence" value="ECO:0007669"/>
    <property type="project" value="UniProtKB-KW"/>
</dbReference>
<dbReference type="GO" id="GO:0007601">
    <property type="term" value="P:visual perception"/>
    <property type="evidence" value="ECO:0007669"/>
    <property type="project" value="UniProtKB-KW"/>
</dbReference>
<dbReference type="CDD" id="cd15079">
    <property type="entry name" value="7tmA_photoreceptors_insect"/>
    <property type="match status" value="1"/>
</dbReference>
<dbReference type="FunFam" id="1.20.1070.10:FF:000044">
    <property type="entry name" value="Opsin, ultraviolet-sensitive"/>
    <property type="match status" value="1"/>
</dbReference>
<dbReference type="Gene3D" id="1.20.1070.10">
    <property type="entry name" value="Rhodopsin 7-helix transmembrane proteins"/>
    <property type="match status" value="1"/>
</dbReference>
<dbReference type="InterPro" id="IPR050125">
    <property type="entry name" value="GPCR_opsins"/>
</dbReference>
<dbReference type="InterPro" id="IPR000276">
    <property type="entry name" value="GPCR_Rhodpsn"/>
</dbReference>
<dbReference type="InterPro" id="IPR017452">
    <property type="entry name" value="GPCR_Rhodpsn_7TM"/>
</dbReference>
<dbReference type="InterPro" id="IPR001760">
    <property type="entry name" value="Opsin"/>
</dbReference>
<dbReference type="InterPro" id="IPR001391">
    <property type="entry name" value="Opsin_lateye"/>
</dbReference>
<dbReference type="InterPro" id="IPR027430">
    <property type="entry name" value="Retinal_BS"/>
</dbReference>
<dbReference type="PANTHER" id="PTHR24240">
    <property type="entry name" value="OPSIN"/>
    <property type="match status" value="1"/>
</dbReference>
<dbReference type="Pfam" id="PF00001">
    <property type="entry name" value="7tm_1"/>
    <property type="match status" value="1"/>
</dbReference>
<dbReference type="PRINTS" id="PR00237">
    <property type="entry name" value="GPCRRHODOPSN"/>
</dbReference>
<dbReference type="PRINTS" id="PR00238">
    <property type="entry name" value="OPSIN"/>
</dbReference>
<dbReference type="PRINTS" id="PR00578">
    <property type="entry name" value="OPSINLTRLEYE"/>
</dbReference>
<dbReference type="SUPFAM" id="SSF81321">
    <property type="entry name" value="Family A G protein-coupled receptor-like"/>
    <property type="match status" value="1"/>
</dbReference>
<dbReference type="PROSITE" id="PS00237">
    <property type="entry name" value="G_PROTEIN_RECEP_F1_1"/>
    <property type="match status" value="1"/>
</dbReference>
<dbReference type="PROSITE" id="PS50262">
    <property type="entry name" value="G_PROTEIN_RECEP_F1_2"/>
    <property type="match status" value="1"/>
</dbReference>
<dbReference type="PROSITE" id="PS00238">
    <property type="entry name" value="OPSIN"/>
    <property type="match status" value="1"/>
</dbReference>
<name>OPSCE_BOMMO</name>
<evidence type="ECO:0000255" key="1"/>
<evidence type="ECO:0000255" key="2">
    <source>
        <dbReference type="PROSITE-ProRule" id="PRU00521"/>
    </source>
</evidence>
<evidence type="ECO:0000269" key="3">
    <source>
    </source>
</evidence>
<evidence type="ECO:0000303" key="4">
    <source>
    </source>
</evidence>
<evidence type="ECO:0000305" key="5"/>
<evidence type="ECO:0000312" key="6">
    <source>
        <dbReference type="EMBL" id="BAB63283.1"/>
    </source>
</evidence>
<evidence type="ECO:0000312" key="7">
    <source>
        <dbReference type="EMBL" id="BAF73627.1"/>
    </source>
</evidence>
<comment type="function">
    <text evidence="3 5">Visual pigments are the light-absorbing molecules that mediate vision. They consist of an apoprotein, opsin, covalently linked to cis-retinal. May play a role in photoperiodic photoreception.</text>
</comment>
<comment type="subcellular location">
    <subcellularLocation>
        <location evidence="1">Membrane</location>
        <topology evidence="1">Multi-pass membrane protein</topology>
    </subcellularLocation>
</comment>
<comment type="tissue specificity">
    <text evidence="3">Expressed bilaterally in dorsal and ventral anterior protocerebral cells and bilaterally in the dorsal posterior protocerebral and lateral posterior tritocerebral cells (at protein level). Expressed in the larval brain but not in the subesophageal ganglion or thoracic ganglion.</text>
</comment>
<comment type="similarity">
    <text evidence="2">Belongs to the G-protein coupled receptor 1 family. Opsin subfamily.</text>
</comment>
<gene>
    <name evidence="7" type="primary">Bcop</name>
</gene>
<accession>Q95YI3</accession>
<proteinExistence type="evidence at protein level"/>
<protein>
    <recommendedName>
        <fullName>Ceropsin</fullName>
    </recommendedName>
    <alternativeName>
        <fullName evidence="4">Cerebral opsin</fullName>
        <shortName evidence="6">Boceropsin</shortName>
    </alternativeName>
</protein>
<organism>
    <name type="scientific">Bombyx mori</name>
    <name type="common">Silk moth</name>
    <dbReference type="NCBI Taxonomy" id="7091"/>
    <lineage>
        <taxon>Eukaryota</taxon>
        <taxon>Metazoa</taxon>
        <taxon>Ecdysozoa</taxon>
        <taxon>Arthropoda</taxon>
        <taxon>Hexapoda</taxon>
        <taxon>Insecta</taxon>
        <taxon>Pterygota</taxon>
        <taxon>Neoptera</taxon>
        <taxon>Endopterygota</taxon>
        <taxon>Lepidoptera</taxon>
        <taxon>Glossata</taxon>
        <taxon>Ditrysia</taxon>
        <taxon>Bombycoidea</taxon>
        <taxon>Bombycidae</taxon>
        <taxon>Bombycinae</taxon>
        <taxon>Bombyx</taxon>
    </lineage>
</organism>